<protein>
    <recommendedName>
        <fullName evidence="1">Protein SlyX homolog</fullName>
    </recommendedName>
</protein>
<proteinExistence type="inferred from homology"/>
<evidence type="ECO:0000255" key="1">
    <source>
        <dbReference type="HAMAP-Rule" id="MF_00715"/>
    </source>
</evidence>
<comment type="similarity">
    <text evidence="1">Belongs to the SlyX family.</text>
</comment>
<reference key="1">
    <citation type="submission" date="2006-08" db="EMBL/GenBank/DDBJ databases">
        <title>Complete sequence of Shewanella sp. MR-4.</title>
        <authorList>
            <consortium name="US DOE Joint Genome Institute"/>
            <person name="Copeland A."/>
            <person name="Lucas S."/>
            <person name="Lapidus A."/>
            <person name="Barry K."/>
            <person name="Detter J.C."/>
            <person name="Glavina del Rio T."/>
            <person name="Hammon N."/>
            <person name="Israni S."/>
            <person name="Dalin E."/>
            <person name="Tice H."/>
            <person name="Pitluck S."/>
            <person name="Kiss H."/>
            <person name="Brettin T."/>
            <person name="Bruce D."/>
            <person name="Han C."/>
            <person name="Tapia R."/>
            <person name="Gilna P."/>
            <person name="Schmutz J."/>
            <person name="Larimer F."/>
            <person name="Land M."/>
            <person name="Hauser L."/>
            <person name="Kyrpides N."/>
            <person name="Mikhailova N."/>
            <person name="Nealson K."/>
            <person name="Konstantinidis K."/>
            <person name="Klappenbach J."/>
            <person name="Tiedje J."/>
            <person name="Richardson P."/>
        </authorList>
    </citation>
    <scope>NUCLEOTIDE SEQUENCE [LARGE SCALE GENOMIC DNA]</scope>
    <source>
        <strain>MR-4</strain>
    </source>
</reference>
<name>SLYX_SHESM</name>
<organism>
    <name type="scientific">Shewanella sp. (strain MR-4)</name>
    <dbReference type="NCBI Taxonomy" id="60480"/>
    <lineage>
        <taxon>Bacteria</taxon>
        <taxon>Pseudomonadati</taxon>
        <taxon>Pseudomonadota</taxon>
        <taxon>Gammaproteobacteria</taxon>
        <taxon>Alteromonadales</taxon>
        <taxon>Shewanellaceae</taxon>
        <taxon>Shewanella</taxon>
    </lineage>
</organism>
<sequence>MQGVQEQIEELQTKLAFQELTVEELNQEVIKLNQLIAHQQHQIQLLIGKLQAMEPSNIATQAEETPPPHY</sequence>
<accession>Q0HFR0</accession>
<gene>
    <name evidence="1" type="primary">slyX</name>
    <name type="ordered locus">Shewmr4_3036</name>
</gene>
<feature type="chain" id="PRO_1000045739" description="Protein SlyX homolog">
    <location>
        <begin position="1"/>
        <end position="70"/>
    </location>
</feature>
<dbReference type="EMBL" id="CP000446">
    <property type="protein sequence ID" value="ABI40107.1"/>
    <property type="molecule type" value="Genomic_DNA"/>
</dbReference>
<dbReference type="RefSeq" id="WP_011623780.1">
    <property type="nucleotide sequence ID" value="NC_008321.1"/>
</dbReference>
<dbReference type="SMR" id="Q0HFR0"/>
<dbReference type="KEGG" id="she:Shewmr4_3036"/>
<dbReference type="HOGENOM" id="CLU_180796_4_0_6"/>
<dbReference type="Gene3D" id="1.20.5.300">
    <property type="match status" value="1"/>
</dbReference>
<dbReference type="HAMAP" id="MF_00715">
    <property type="entry name" value="SlyX"/>
    <property type="match status" value="1"/>
</dbReference>
<dbReference type="InterPro" id="IPR007236">
    <property type="entry name" value="SlyX"/>
</dbReference>
<dbReference type="PANTHER" id="PTHR36508">
    <property type="entry name" value="PROTEIN SLYX"/>
    <property type="match status" value="1"/>
</dbReference>
<dbReference type="PANTHER" id="PTHR36508:SF1">
    <property type="entry name" value="PROTEIN SLYX"/>
    <property type="match status" value="1"/>
</dbReference>
<dbReference type="Pfam" id="PF04102">
    <property type="entry name" value="SlyX"/>
    <property type="match status" value="1"/>
</dbReference>